<evidence type="ECO:0000255" key="1">
    <source>
        <dbReference type="HAMAP-Rule" id="MF_00179"/>
    </source>
</evidence>
<feature type="chain" id="PRO_1000040581" description="GTP cyclohydrolase-2">
    <location>
        <begin position="1"/>
        <end position="205"/>
    </location>
</feature>
<feature type="active site" description="Proton acceptor" evidence="1">
    <location>
        <position position="126"/>
    </location>
</feature>
<feature type="active site" description="Nucleophile" evidence="1">
    <location>
        <position position="128"/>
    </location>
</feature>
<feature type="binding site" evidence="1">
    <location>
        <begin position="49"/>
        <end position="53"/>
    </location>
    <ligand>
        <name>GTP</name>
        <dbReference type="ChEBI" id="CHEBI:37565"/>
    </ligand>
</feature>
<feature type="binding site" evidence="1">
    <location>
        <position position="54"/>
    </location>
    <ligand>
        <name>Zn(2+)</name>
        <dbReference type="ChEBI" id="CHEBI:29105"/>
        <note>catalytic</note>
    </ligand>
</feature>
<feature type="binding site" evidence="1">
    <location>
        <position position="65"/>
    </location>
    <ligand>
        <name>Zn(2+)</name>
        <dbReference type="ChEBI" id="CHEBI:29105"/>
        <note>catalytic</note>
    </ligand>
</feature>
<feature type="binding site" evidence="1">
    <location>
        <position position="67"/>
    </location>
    <ligand>
        <name>Zn(2+)</name>
        <dbReference type="ChEBI" id="CHEBI:29105"/>
        <note>catalytic</note>
    </ligand>
</feature>
<feature type="binding site" evidence="1">
    <location>
        <position position="70"/>
    </location>
    <ligand>
        <name>GTP</name>
        <dbReference type="ChEBI" id="CHEBI:37565"/>
    </ligand>
</feature>
<feature type="binding site" evidence="1">
    <location>
        <begin position="92"/>
        <end position="94"/>
    </location>
    <ligand>
        <name>GTP</name>
        <dbReference type="ChEBI" id="CHEBI:37565"/>
    </ligand>
</feature>
<feature type="binding site" evidence="1">
    <location>
        <position position="114"/>
    </location>
    <ligand>
        <name>GTP</name>
        <dbReference type="ChEBI" id="CHEBI:37565"/>
    </ligand>
</feature>
<feature type="binding site" evidence="1">
    <location>
        <position position="149"/>
    </location>
    <ligand>
        <name>GTP</name>
        <dbReference type="ChEBI" id="CHEBI:37565"/>
    </ligand>
</feature>
<feature type="binding site" evidence="1">
    <location>
        <position position="154"/>
    </location>
    <ligand>
        <name>GTP</name>
        <dbReference type="ChEBI" id="CHEBI:37565"/>
    </ligand>
</feature>
<organism>
    <name type="scientific">Shewanella denitrificans (strain OS217 / ATCC BAA-1090 / DSM 15013)</name>
    <dbReference type="NCBI Taxonomy" id="318161"/>
    <lineage>
        <taxon>Bacteria</taxon>
        <taxon>Pseudomonadati</taxon>
        <taxon>Pseudomonadota</taxon>
        <taxon>Gammaproteobacteria</taxon>
        <taxon>Alteromonadales</taxon>
        <taxon>Shewanellaceae</taxon>
        <taxon>Shewanella</taxon>
    </lineage>
</organism>
<sequence length="205" mass="22965">MSINYIATSKLPTPWGVFSMHGFEDTQTGKEHVALTFGEWQPSHAILGRIHSECLTGDALFSLRCDCGFQLQTAMQNIAEAGQGFILYLRQEGRGIGLLNKIRAYELQDAGANTVEANERLGFDADMRKYDMIAPMLEKIAVTQVKLMTNNPRKVKAMQDLGIVVAERVPLQVGKNRYNEAYLKTKSTELGHMMSEHHFNDDKGN</sequence>
<proteinExistence type="inferred from homology"/>
<comment type="function">
    <text evidence="1">Catalyzes the conversion of GTP to 2,5-diamino-6-ribosylamino-4(3H)-pyrimidinone 5'-phosphate (DARP), formate and pyrophosphate.</text>
</comment>
<comment type="catalytic activity">
    <reaction evidence="1">
        <text>GTP + 4 H2O = 2,5-diamino-6-hydroxy-4-(5-phosphoribosylamino)-pyrimidine + formate + 2 phosphate + 3 H(+)</text>
        <dbReference type="Rhea" id="RHEA:23704"/>
        <dbReference type="ChEBI" id="CHEBI:15377"/>
        <dbReference type="ChEBI" id="CHEBI:15378"/>
        <dbReference type="ChEBI" id="CHEBI:15740"/>
        <dbReference type="ChEBI" id="CHEBI:37565"/>
        <dbReference type="ChEBI" id="CHEBI:43474"/>
        <dbReference type="ChEBI" id="CHEBI:58614"/>
        <dbReference type="EC" id="3.5.4.25"/>
    </reaction>
</comment>
<comment type="cofactor">
    <cofactor evidence="1">
        <name>Zn(2+)</name>
        <dbReference type="ChEBI" id="CHEBI:29105"/>
    </cofactor>
    <text evidence="1">Binds 1 zinc ion per subunit.</text>
</comment>
<comment type="pathway">
    <text evidence="1">Cofactor biosynthesis; riboflavin biosynthesis; 5-amino-6-(D-ribitylamino)uracil from GTP: step 1/4.</text>
</comment>
<comment type="similarity">
    <text evidence="1">Belongs to the GTP cyclohydrolase II family.</text>
</comment>
<dbReference type="EC" id="3.5.4.25" evidence="1"/>
<dbReference type="EMBL" id="CP000302">
    <property type="protein sequence ID" value="ABE54732.1"/>
    <property type="molecule type" value="Genomic_DNA"/>
</dbReference>
<dbReference type="RefSeq" id="WP_011495890.1">
    <property type="nucleotide sequence ID" value="NC_007954.1"/>
</dbReference>
<dbReference type="SMR" id="Q12P94"/>
<dbReference type="STRING" id="318161.Sden_1447"/>
<dbReference type="KEGG" id="sdn:Sden_1447"/>
<dbReference type="eggNOG" id="COG0807">
    <property type="taxonomic scope" value="Bacteria"/>
</dbReference>
<dbReference type="HOGENOM" id="CLU_020273_2_1_6"/>
<dbReference type="OrthoDB" id="9793111at2"/>
<dbReference type="UniPathway" id="UPA00275">
    <property type="reaction ID" value="UER00400"/>
</dbReference>
<dbReference type="Proteomes" id="UP000001982">
    <property type="component" value="Chromosome"/>
</dbReference>
<dbReference type="GO" id="GO:0005829">
    <property type="term" value="C:cytosol"/>
    <property type="evidence" value="ECO:0007669"/>
    <property type="project" value="TreeGrafter"/>
</dbReference>
<dbReference type="GO" id="GO:0005525">
    <property type="term" value="F:GTP binding"/>
    <property type="evidence" value="ECO:0007669"/>
    <property type="project" value="UniProtKB-KW"/>
</dbReference>
<dbReference type="GO" id="GO:0003935">
    <property type="term" value="F:GTP cyclohydrolase II activity"/>
    <property type="evidence" value="ECO:0007669"/>
    <property type="project" value="UniProtKB-UniRule"/>
</dbReference>
<dbReference type="GO" id="GO:0008270">
    <property type="term" value="F:zinc ion binding"/>
    <property type="evidence" value="ECO:0007669"/>
    <property type="project" value="UniProtKB-UniRule"/>
</dbReference>
<dbReference type="GO" id="GO:0009231">
    <property type="term" value="P:riboflavin biosynthetic process"/>
    <property type="evidence" value="ECO:0007669"/>
    <property type="project" value="UniProtKB-UniRule"/>
</dbReference>
<dbReference type="CDD" id="cd00641">
    <property type="entry name" value="GTP_cyclohydro2"/>
    <property type="match status" value="1"/>
</dbReference>
<dbReference type="FunFam" id="3.40.50.10990:FF:000002">
    <property type="entry name" value="GTP cyclohydrolase-2"/>
    <property type="match status" value="1"/>
</dbReference>
<dbReference type="Gene3D" id="3.40.50.10990">
    <property type="entry name" value="GTP cyclohydrolase II"/>
    <property type="match status" value="1"/>
</dbReference>
<dbReference type="HAMAP" id="MF_00179">
    <property type="entry name" value="RibA"/>
    <property type="match status" value="1"/>
</dbReference>
<dbReference type="InterPro" id="IPR032677">
    <property type="entry name" value="GTP_cyclohydro_II"/>
</dbReference>
<dbReference type="InterPro" id="IPR000926">
    <property type="entry name" value="RibA"/>
</dbReference>
<dbReference type="InterPro" id="IPR036144">
    <property type="entry name" value="RibA-like_sf"/>
</dbReference>
<dbReference type="NCBIfam" id="NF001591">
    <property type="entry name" value="PRK00393.1"/>
    <property type="match status" value="1"/>
</dbReference>
<dbReference type="NCBIfam" id="TIGR00505">
    <property type="entry name" value="ribA"/>
    <property type="match status" value="1"/>
</dbReference>
<dbReference type="PANTHER" id="PTHR21327:SF18">
    <property type="entry name" value="3,4-DIHYDROXY-2-BUTANONE 4-PHOSPHATE SYNTHASE"/>
    <property type="match status" value="1"/>
</dbReference>
<dbReference type="PANTHER" id="PTHR21327">
    <property type="entry name" value="GTP CYCLOHYDROLASE II-RELATED"/>
    <property type="match status" value="1"/>
</dbReference>
<dbReference type="Pfam" id="PF00925">
    <property type="entry name" value="GTP_cyclohydro2"/>
    <property type="match status" value="1"/>
</dbReference>
<dbReference type="SUPFAM" id="SSF142695">
    <property type="entry name" value="RibA-like"/>
    <property type="match status" value="1"/>
</dbReference>
<keyword id="KW-0342">GTP-binding</keyword>
<keyword id="KW-0378">Hydrolase</keyword>
<keyword id="KW-0479">Metal-binding</keyword>
<keyword id="KW-0547">Nucleotide-binding</keyword>
<keyword id="KW-1185">Reference proteome</keyword>
<keyword id="KW-0686">Riboflavin biosynthesis</keyword>
<keyword id="KW-0862">Zinc</keyword>
<protein>
    <recommendedName>
        <fullName evidence="1">GTP cyclohydrolase-2</fullName>
        <ecNumber evidence="1">3.5.4.25</ecNumber>
    </recommendedName>
    <alternativeName>
        <fullName evidence="1">GTP cyclohydrolase II</fullName>
    </alternativeName>
</protein>
<reference key="1">
    <citation type="submission" date="2006-03" db="EMBL/GenBank/DDBJ databases">
        <title>Complete sequence of Shewanella denitrificans OS217.</title>
        <authorList>
            <consortium name="US DOE Joint Genome Institute"/>
            <person name="Copeland A."/>
            <person name="Lucas S."/>
            <person name="Lapidus A."/>
            <person name="Barry K."/>
            <person name="Detter J.C."/>
            <person name="Glavina del Rio T."/>
            <person name="Hammon N."/>
            <person name="Israni S."/>
            <person name="Dalin E."/>
            <person name="Tice H."/>
            <person name="Pitluck S."/>
            <person name="Brettin T."/>
            <person name="Bruce D."/>
            <person name="Han C."/>
            <person name="Tapia R."/>
            <person name="Gilna P."/>
            <person name="Kiss H."/>
            <person name="Schmutz J."/>
            <person name="Larimer F."/>
            <person name="Land M."/>
            <person name="Hauser L."/>
            <person name="Kyrpides N."/>
            <person name="Lykidis A."/>
            <person name="Richardson P."/>
        </authorList>
    </citation>
    <scope>NUCLEOTIDE SEQUENCE [LARGE SCALE GENOMIC DNA]</scope>
    <source>
        <strain>OS217 / ATCC BAA-1090 / DSM 15013</strain>
    </source>
</reference>
<gene>
    <name evidence="1" type="primary">ribA</name>
    <name type="ordered locus">Sden_1447</name>
</gene>
<accession>Q12P94</accession>
<name>RIBA_SHEDO</name>